<sequence length="1286" mass="145059">MDKLNKKNKNKRIRGLQISIASAEEMRSWSHGEVKKPETINYKSLKPETDGLFDEAIFGPVKDFECACGKYKKIKHRGRTCEKCGVEITESIVRRERMGHIDLAVPVAHIWMTKELPSPSKISLVLDVSYKEVEEVVYFVNYIILNPGNSKNPVFKFKEVVDLSGKGSKSARIKLRKVLREIKDKHQADKHSIIYKRASDYYNKLKESHLPFSIDEVAKFIETHTGIRLGIGAEAILELLEGVDLQKEYDLINEELNSYSKDLKANKEDQKVKRALRRLETIKWLKESGIKASNMILKVIPVTPPDTRPIIQLDGARFTTSDINNFYRRIIIRNERLKKIIELRAPSVILNNEKRMLQEVVDALFDNASRKKPITAKDKRPLKSLTDRLKGKQGLFRQNLLGKRVDYSGRSVIVIGPELKMYEVGIPAPMILKLFKPFIIRELIMRFNEDGQEIKPIAPNIKIAEQMIAQKSERIWDIVDKVIKERPVLLNRAPTLHRLGIQAFEPKIVDGKAIRLHPLVTTAFNADFDGDQMAVHVPISKEAVAEARAIMLASWHILGPKDGKPVATPTQDMVLGNYYLTTEKRNEKGEGLIFSDFDQVILAYEAKQVSIHALIGLSTKCLTKKPFAKQGIVITTVGKAIMNSIMPEEMAYLNDGDNLLELDESNIVFAGEDFKQKLAKRPLYKPFGKKTLSKIIEILYKNFPLQKVPQVLDKIKEFGFKYSTLSSTTISVFDIPRYDNKQEYITKANEMIAKLKHMYQKGLLTDDERYTKVIRLWADVKDNVSRDIKEIITRPEYKENSIVVIADSGARGNISNFTQLFGMRGLMSKSYNYDQKIKSQVIRDTIEVPIKHSFIEGLTINEYFNSSYGARKGMTDIAMKTSKSGYMTRKLVDAAQEVIINDSDCNTNKGIVVSTITNSLDGGVVETLSERIVTRYTIDPIYDEKTKELLVDADTLITSELAEKIAKANVTKALIRSPIYCQSTKGLCQKCFGNDLTTNDLVQIGTAIGVIAAQSIGEPGTQLTMRTFHTGGTANEGNITQGFERLKQIFDVVSPKEWELATIAENEGVVESITSDATARIIRIKTRLEAEEYRVPFDAVISVNPKDVVYPGSKLTEGSIDIKHLLRVAGIETVRQYFLEEVQKVYRLQGIEIADKYVEVTIRQLTNKLQVIDVGDSDYFVGQTVDINKFRKEVTNMLIANKRPPVAINQVFGLDEAPAKTGSFLSAASFQDTKKILTDAAVKNQIDYLVGLKENVILGNLIPAGTGFMSSEEIIKAGEEALEKEY</sequence>
<feature type="chain" id="PRO_0000067758" description="DNA-directed RNA polymerase subunit beta'">
    <location>
        <begin position="1"/>
        <end position="1286"/>
    </location>
</feature>
<feature type="binding site" evidence="1">
    <location>
        <position position="66"/>
    </location>
    <ligand>
        <name>Zn(2+)</name>
        <dbReference type="ChEBI" id="CHEBI:29105"/>
        <label>1</label>
    </ligand>
</feature>
<feature type="binding site" evidence="1">
    <location>
        <position position="68"/>
    </location>
    <ligand>
        <name>Zn(2+)</name>
        <dbReference type="ChEBI" id="CHEBI:29105"/>
        <label>1</label>
    </ligand>
</feature>
<feature type="binding site" evidence="1">
    <location>
        <position position="81"/>
    </location>
    <ligand>
        <name>Zn(2+)</name>
        <dbReference type="ChEBI" id="CHEBI:29105"/>
        <label>1</label>
    </ligand>
</feature>
<feature type="binding site" evidence="1">
    <location>
        <position position="84"/>
    </location>
    <ligand>
        <name>Zn(2+)</name>
        <dbReference type="ChEBI" id="CHEBI:29105"/>
        <label>1</label>
    </ligand>
</feature>
<feature type="binding site" evidence="1">
    <location>
        <position position="527"/>
    </location>
    <ligand>
        <name>Mg(2+)</name>
        <dbReference type="ChEBI" id="CHEBI:18420"/>
    </ligand>
</feature>
<feature type="binding site" evidence="1">
    <location>
        <position position="529"/>
    </location>
    <ligand>
        <name>Mg(2+)</name>
        <dbReference type="ChEBI" id="CHEBI:18420"/>
    </ligand>
</feature>
<feature type="binding site" evidence="1">
    <location>
        <position position="531"/>
    </location>
    <ligand>
        <name>Mg(2+)</name>
        <dbReference type="ChEBI" id="CHEBI:18420"/>
    </ligand>
</feature>
<feature type="binding site" evidence="1">
    <location>
        <position position="905"/>
    </location>
    <ligand>
        <name>Zn(2+)</name>
        <dbReference type="ChEBI" id="CHEBI:29105"/>
        <label>2</label>
    </ligand>
</feature>
<feature type="binding site" evidence="1">
    <location>
        <position position="981"/>
    </location>
    <ligand>
        <name>Zn(2+)</name>
        <dbReference type="ChEBI" id="CHEBI:29105"/>
        <label>2</label>
    </ligand>
</feature>
<feature type="binding site" evidence="1">
    <location>
        <position position="988"/>
    </location>
    <ligand>
        <name>Zn(2+)</name>
        <dbReference type="ChEBI" id="CHEBI:29105"/>
        <label>2</label>
    </ligand>
</feature>
<feature type="binding site" evidence="1">
    <location>
        <position position="991"/>
    </location>
    <ligand>
        <name>Zn(2+)</name>
        <dbReference type="ChEBI" id="CHEBI:29105"/>
        <label>2</label>
    </ligand>
</feature>
<name>RPOC_MYCGA</name>
<accession>P47716</accession>
<evidence type="ECO:0000255" key="1">
    <source>
        <dbReference type="HAMAP-Rule" id="MF_01322"/>
    </source>
</evidence>
<organism>
    <name type="scientific">Mycoplasmoides gallisepticum (strain R(low / passage 15 / clone 2))</name>
    <name type="common">Mycoplasma gallisepticum</name>
    <dbReference type="NCBI Taxonomy" id="710127"/>
    <lineage>
        <taxon>Bacteria</taxon>
        <taxon>Bacillati</taxon>
        <taxon>Mycoplasmatota</taxon>
        <taxon>Mycoplasmoidales</taxon>
        <taxon>Mycoplasmoidaceae</taxon>
        <taxon>Mycoplasmoides</taxon>
    </lineage>
</organism>
<gene>
    <name evidence="1" type="primary">rpoC</name>
    <name type="ordered locus">MYCGA2140</name>
    <name type="ORF">MGA_1005</name>
</gene>
<dbReference type="EC" id="2.7.7.6" evidence="1"/>
<dbReference type="EMBL" id="AE015450">
    <property type="protein sequence ID" value="AAP56564.1"/>
    <property type="molecule type" value="Genomic_DNA"/>
</dbReference>
<dbReference type="EMBL" id="L38402">
    <property type="protein sequence ID" value="AAB40952.1"/>
    <property type="molecule type" value="Genomic_DNA"/>
</dbReference>
<dbReference type="RefSeq" id="WP_011113455.1">
    <property type="nucleotide sequence ID" value="NC_004829.2"/>
</dbReference>
<dbReference type="SMR" id="P47716"/>
<dbReference type="KEGG" id="mga:MGA_1005"/>
<dbReference type="HOGENOM" id="CLU_000524_3_1_14"/>
<dbReference type="OrthoDB" id="9815296at2"/>
<dbReference type="Proteomes" id="UP000001418">
    <property type="component" value="Chromosome"/>
</dbReference>
<dbReference type="GO" id="GO:0000428">
    <property type="term" value="C:DNA-directed RNA polymerase complex"/>
    <property type="evidence" value="ECO:0007669"/>
    <property type="project" value="UniProtKB-KW"/>
</dbReference>
<dbReference type="GO" id="GO:0003677">
    <property type="term" value="F:DNA binding"/>
    <property type="evidence" value="ECO:0007669"/>
    <property type="project" value="UniProtKB-UniRule"/>
</dbReference>
<dbReference type="GO" id="GO:0003899">
    <property type="term" value="F:DNA-directed RNA polymerase activity"/>
    <property type="evidence" value="ECO:0007669"/>
    <property type="project" value="UniProtKB-UniRule"/>
</dbReference>
<dbReference type="GO" id="GO:0000287">
    <property type="term" value="F:magnesium ion binding"/>
    <property type="evidence" value="ECO:0007669"/>
    <property type="project" value="UniProtKB-UniRule"/>
</dbReference>
<dbReference type="GO" id="GO:0008270">
    <property type="term" value="F:zinc ion binding"/>
    <property type="evidence" value="ECO:0007669"/>
    <property type="project" value="UniProtKB-UniRule"/>
</dbReference>
<dbReference type="GO" id="GO:0006351">
    <property type="term" value="P:DNA-templated transcription"/>
    <property type="evidence" value="ECO:0007669"/>
    <property type="project" value="UniProtKB-UniRule"/>
</dbReference>
<dbReference type="CDD" id="cd02655">
    <property type="entry name" value="RNAP_beta'_C"/>
    <property type="match status" value="1"/>
</dbReference>
<dbReference type="CDD" id="cd01609">
    <property type="entry name" value="RNAP_beta'_N"/>
    <property type="match status" value="1"/>
</dbReference>
<dbReference type="Gene3D" id="1.10.132.30">
    <property type="match status" value="1"/>
</dbReference>
<dbReference type="Gene3D" id="1.10.150.390">
    <property type="match status" value="1"/>
</dbReference>
<dbReference type="Gene3D" id="1.10.1790.20">
    <property type="match status" value="1"/>
</dbReference>
<dbReference type="Gene3D" id="1.10.40.90">
    <property type="match status" value="1"/>
</dbReference>
<dbReference type="Gene3D" id="2.40.40.20">
    <property type="match status" value="1"/>
</dbReference>
<dbReference type="Gene3D" id="2.40.50.100">
    <property type="match status" value="1"/>
</dbReference>
<dbReference type="Gene3D" id="4.10.860.120">
    <property type="entry name" value="RNA polymerase II, clamp domain"/>
    <property type="match status" value="1"/>
</dbReference>
<dbReference type="Gene3D" id="1.10.274.100">
    <property type="entry name" value="RNA polymerase Rpb1, domain 3"/>
    <property type="match status" value="1"/>
</dbReference>
<dbReference type="HAMAP" id="MF_01322">
    <property type="entry name" value="RNApol_bact_RpoC"/>
    <property type="match status" value="1"/>
</dbReference>
<dbReference type="InterPro" id="IPR045867">
    <property type="entry name" value="DNA-dir_RpoC_beta_prime"/>
</dbReference>
<dbReference type="InterPro" id="IPR012754">
    <property type="entry name" value="DNA-dir_RpoC_beta_prime_bact"/>
</dbReference>
<dbReference type="InterPro" id="IPR000722">
    <property type="entry name" value="RNA_pol_asu"/>
</dbReference>
<dbReference type="InterPro" id="IPR006592">
    <property type="entry name" value="RNA_pol_N"/>
</dbReference>
<dbReference type="InterPro" id="IPR007080">
    <property type="entry name" value="RNA_pol_Rpb1_1"/>
</dbReference>
<dbReference type="InterPro" id="IPR007066">
    <property type="entry name" value="RNA_pol_Rpb1_3"/>
</dbReference>
<dbReference type="InterPro" id="IPR042102">
    <property type="entry name" value="RNA_pol_Rpb1_3_sf"/>
</dbReference>
<dbReference type="InterPro" id="IPR007083">
    <property type="entry name" value="RNA_pol_Rpb1_4"/>
</dbReference>
<dbReference type="InterPro" id="IPR007081">
    <property type="entry name" value="RNA_pol_Rpb1_5"/>
</dbReference>
<dbReference type="InterPro" id="IPR044893">
    <property type="entry name" value="RNA_pol_Rpb1_clamp_domain"/>
</dbReference>
<dbReference type="InterPro" id="IPR038120">
    <property type="entry name" value="Rpb1_funnel_sf"/>
</dbReference>
<dbReference type="NCBIfam" id="TIGR02386">
    <property type="entry name" value="rpoC_TIGR"/>
    <property type="match status" value="1"/>
</dbReference>
<dbReference type="PANTHER" id="PTHR19376">
    <property type="entry name" value="DNA-DIRECTED RNA POLYMERASE"/>
    <property type="match status" value="1"/>
</dbReference>
<dbReference type="PANTHER" id="PTHR19376:SF54">
    <property type="entry name" value="DNA-DIRECTED RNA POLYMERASE SUBUNIT BETA"/>
    <property type="match status" value="1"/>
</dbReference>
<dbReference type="Pfam" id="PF04997">
    <property type="entry name" value="RNA_pol_Rpb1_1"/>
    <property type="match status" value="1"/>
</dbReference>
<dbReference type="Pfam" id="PF00623">
    <property type="entry name" value="RNA_pol_Rpb1_2"/>
    <property type="match status" value="1"/>
</dbReference>
<dbReference type="Pfam" id="PF04983">
    <property type="entry name" value="RNA_pol_Rpb1_3"/>
    <property type="match status" value="1"/>
</dbReference>
<dbReference type="Pfam" id="PF05000">
    <property type="entry name" value="RNA_pol_Rpb1_4"/>
    <property type="match status" value="1"/>
</dbReference>
<dbReference type="Pfam" id="PF04998">
    <property type="entry name" value="RNA_pol_Rpb1_5"/>
    <property type="match status" value="1"/>
</dbReference>
<dbReference type="SMART" id="SM00663">
    <property type="entry name" value="RPOLA_N"/>
    <property type="match status" value="1"/>
</dbReference>
<dbReference type="SUPFAM" id="SSF64484">
    <property type="entry name" value="beta and beta-prime subunits of DNA dependent RNA-polymerase"/>
    <property type="match status" value="1"/>
</dbReference>
<reference key="1">
    <citation type="journal article" date="2003" name="Microbiology">
        <title>The complete genome sequence of the avian pathogen Mycoplasma gallisepticum strain R(low).</title>
        <authorList>
            <person name="Papazisi L."/>
            <person name="Gorton T.S."/>
            <person name="Kutish G."/>
            <person name="Markham P.F."/>
            <person name="Browning G.F."/>
            <person name="Nguyen D.K."/>
            <person name="Swartzell S."/>
            <person name="Madan A."/>
            <person name="Mahairas G."/>
            <person name="Geary S.J."/>
        </authorList>
    </citation>
    <scope>NUCLEOTIDE SEQUENCE [LARGE SCALE GENOMIC DNA]</scope>
    <source>
        <strain>R(low / passage 15 / clone 2)</strain>
    </source>
</reference>
<reference key="2">
    <citation type="journal article" date="1996" name="Mol. Biol. (Mosk.)">
        <title>Determination of the nucleotide sequence of the part of the Mycoplasma gallisepticum genome, containing the rpoB gene, during the use of the Bal-pTM method for obtaining sequential deletions of the sequenced fragment.</title>
        <authorList>
            <person name="Skamrov A.V."/>
            <person name="Rozovskaia T.A."/>
            <person name="Gol'dman M.A."/>
            <person name="Feotistova E.S."/>
            <person name="Bibilashvili R.S."/>
        </authorList>
    </citation>
    <scope>NUCLEOTIDE SEQUENCE [GENOMIC DNA] OF 1-13</scope>
    <source>
        <strain>A5969Var.B</strain>
    </source>
</reference>
<keyword id="KW-0240">DNA-directed RNA polymerase</keyword>
<keyword id="KW-0460">Magnesium</keyword>
<keyword id="KW-0479">Metal-binding</keyword>
<keyword id="KW-0548">Nucleotidyltransferase</keyword>
<keyword id="KW-1185">Reference proteome</keyword>
<keyword id="KW-0804">Transcription</keyword>
<keyword id="KW-0808">Transferase</keyword>
<keyword id="KW-0862">Zinc</keyword>
<comment type="function">
    <text evidence="1">DNA-dependent RNA polymerase catalyzes the transcription of DNA into RNA using the four ribonucleoside triphosphates as substrates.</text>
</comment>
<comment type="catalytic activity">
    <reaction evidence="1">
        <text>RNA(n) + a ribonucleoside 5'-triphosphate = RNA(n+1) + diphosphate</text>
        <dbReference type="Rhea" id="RHEA:21248"/>
        <dbReference type="Rhea" id="RHEA-COMP:14527"/>
        <dbReference type="Rhea" id="RHEA-COMP:17342"/>
        <dbReference type="ChEBI" id="CHEBI:33019"/>
        <dbReference type="ChEBI" id="CHEBI:61557"/>
        <dbReference type="ChEBI" id="CHEBI:140395"/>
        <dbReference type="EC" id="2.7.7.6"/>
    </reaction>
</comment>
<comment type="cofactor">
    <cofactor evidence="1">
        <name>Mg(2+)</name>
        <dbReference type="ChEBI" id="CHEBI:18420"/>
    </cofactor>
    <text evidence="1">Binds 1 Mg(2+) ion per subunit.</text>
</comment>
<comment type="cofactor">
    <cofactor evidence="1">
        <name>Zn(2+)</name>
        <dbReference type="ChEBI" id="CHEBI:29105"/>
    </cofactor>
    <text evidence="1">Binds 2 Zn(2+) ions per subunit.</text>
</comment>
<comment type="subunit">
    <text evidence="1">The RNAP catalytic core consists of 2 alpha, 1 beta, 1 beta' and 1 omega subunit. When a sigma factor is associated with the core the holoenzyme is formed, which can initiate transcription.</text>
</comment>
<comment type="similarity">
    <text evidence="1">Belongs to the RNA polymerase beta' chain family.</text>
</comment>
<protein>
    <recommendedName>
        <fullName evidence="1">DNA-directed RNA polymerase subunit beta'</fullName>
        <shortName evidence="1">RNAP subunit beta'</shortName>
        <ecNumber evidence="1">2.7.7.6</ecNumber>
    </recommendedName>
    <alternativeName>
        <fullName evidence="1">RNA polymerase subunit beta'</fullName>
    </alternativeName>
    <alternativeName>
        <fullName evidence="1">Transcriptase subunit beta'</fullName>
    </alternativeName>
</protein>
<proteinExistence type="inferred from homology"/>